<evidence type="ECO:0000250" key="1"/>
<evidence type="ECO:0000255" key="2">
    <source>
        <dbReference type="PROSITE-ProRule" id="PRU00054"/>
    </source>
</evidence>
<evidence type="ECO:0000269" key="3">
    <source>
    </source>
</evidence>
<evidence type="ECO:0000305" key="4"/>
<protein>
    <recommendedName>
        <fullName>N-carbamoylputrescine amidase</fullName>
        <ecNumber>3.5.1.53</ecNumber>
    </recommendedName>
</protein>
<comment type="function">
    <text evidence="3">Involved in polyamine biosynthesis.</text>
</comment>
<comment type="catalytic activity">
    <reaction>
        <text>N-carbamoylputrescine + H2O + 2 H(+) = putrescine + NH4(+) + CO2</text>
        <dbReference type="Rhea" id="RHEA:22284"/>
        <dbReference type="ChEBI" id="CHEBI:15377"/>
        <dbReference type="ChEBI" id="CHEBI:15378"/>
        <dbReference type="ChEBI" id="CHEBI:16526"/>
        <dbReference type="ChEBI" id="CHEBI:28938"/>
        <dbReference type="ChEBI" id="CHEBI:58318"/>
        <dbReference type="ChEBI" id="CHEBI:326268"/>
        <dbReference type="EC" id="3.5.1.53"/>
    </reaction>
</comment>
<comment type="pathway">
    <text>Amine and polyamine biosynthesis; putrescine biosynthesis via agmatine pathway; putrescine from N-carbamoylputrescine (amidase route): step 1/1.</text>
</comment>
<comment type="subunit">
    <text evidence="1">Homooctamer.</text>
</comment>
<comment type="similarity">
    <text evidence="4">Belongs to the carbon-nitrogen hydrolase superfamily.</text>
</comment>
<proteinExistence type="evidence at transcript level"/>
<sequence length="300" mass="33405">MAEKNRLVTVAALQFACTDDVSTNVATAERLVRAAHQKGANIILIQELFEGYYFCQAQKEEFFHRAKPYPGHPTIVRMQNLAKELGVVIPVSFFEEANNAHYNSVAIIDADGTDLGLYRKSHIPDGPGYQEKYYFNPGDTGFKVFQTKYAKIGVAICWDQWFPEAARAMALQGAEVLFYPTAIGSEPQDDGLDSRDHWRRVMQGHAGANVVPLVASNRIGKEIIETEHGNSEITFYGYSFIAGPTGELVAAAGDKEEAVLVAQFDLDKIKSKRHGWGVYRDRRPDLYKVLLTLDGSNPVK</sequence>
<keyword id="KW-0378">Hydrolase</keyword>
<keyword id="KW-0620">Polyamine biosynthesis</keyword>
<keyword id="KW-1185">Reference proteome</keyword>
<dbReference type="EC" id="3.5.1.53"/>
<dbReference type="EMBL" id="Y19104">
    <property type="protein sequence ID" value="CAB45873.1"/>
    <property type="molecule type" value="mRNA"/>
</dbReference>
<dbReference type="RefSeq" id="NP_001234385.1">
    <property type="nucleotide sequence ID" value="NM_001247456.1"/>
</dbReference>
<dbReference type="SMR" id="Q9XGI9"/>
<dbReference type="FunCoup" id="Q9XGI9">
    <property type="interactions" value="376"/>
</dbReference>
<dbReference type="STRING" id="4081.Q9XGI9"/>
<dbReference type="PaxDb" id="4081-Solyc11g068540.1.1"/>
<dbReference type="EnsemblPlants" id="Solyc11g068540.2.1">
    <property type="protein sequence ID" value="Solyc11g068540.2.1"/>
    <property type="gene ID" value="Solyc11g068540.2"/>
</dbReference>
<dbReference type="GeneID" id="544141"/>
<dbReference type="Gramene" id="Solyc11g068540.2.1">
    <property type="protein sequence ID" value="Solyc11g068540.2.1"/>
    <property type="gene ID" value="Solyc11g068540.2"/>
</dbReference>
<dbReference type="KEGG" id="sly:544141"/>
<dbReference type="eggNOG" id="KOG0806">
    <property type="taxonomic scope" value="Eukaryota"/>
</dbReference>
<dbReference type="HOGENOM" id="CLU_030130_4_0_1"/>
<dbReference type="InParanoid" id="Q9XGI9"/>
<dbReference type="OMA" id="APYFCQV"/>
<dbReference type="OrthoDB" id="412018at2759"/>
<dbReference type="PhylomeDB" id="Q9XGI9"/>
<dbReference type="UniPathway" id="UPA00534">
    <property type="reaction ID" value="UER00286"/>
</dbReference>
<dbReference type="Proteomes" id="UP000004994">
    <property type="component" value="Chromosome 11"/>
</dbReference>
<dbReference type="GO" id="GO:0050126">
    <property type="term" value="F:N-carbamoylputrescine amidase activity"/>
    <property type="evidence" value="ECO:0000318"/>
    <property type="project" value="GO_Central"/>
</dbReference>
<dbReference type="GO" id="GO:0033388">
    <property type="term" value="P:putrescine biosynthetic process from arginine"/>
    <property type="evidence" value="ECO:0000318"/>
    <property type="project" value="GO_Central"/>
</dbReference>
<dbReference type="CDD" id="cd07573">
    <property type="entry name" value="CPA"/>
    <property type="match status" value="1"/>
</dbReference>
<dbReference type="FunFam" id="3.60.110.10:FF:000012">
    <property type="entry name" value="N-carbamoylputrescine amidohydrolase, putative"/>
    <property type="match status" value="1"/>
</dbReference>
<dbReference type="Gene3D" id="3.60.110.10">
    <property type="entry name" value="Carbon-nitrogen hydrolase"/>
    <property type="match status" value="1"/>
</dbReference>
<dbReference type="InterPro" id="IPR050345">
    <property type="entry name" value="Aliph_Amidase/BUP"/>
</dbReference>
<dbReference type="InterPro" id="IPR003010">
    <property type="entry name" value="C-N_Hydrolase"/>
</dbReference>
<dbReference type="InterPro" id="IPR036526">
    <property type="entry name" value="C-N_Hydrolase_sf"/>
</dbReference>
<dbReference type="InterPro" id="IPR017755">
    <property type="entry name" value="N-carbamoylputrescine_amidase"/>
</dbReference>
<dbReference type="NCBIfam" id="TIGR03381">
    <property type="entry name" value="agmatine_aguB"/>
    <property type="match status" value="1"/>
</dbReference>
<dbReference type="PANTHER" id="PTHR43674:SF2">
    <property type="entry name" value="BETA-UREIDOPROPIONASE"/>
    <property type="match status" value="1"/>
</dbReference>
<dbReference type="PANTHER" id="PTHR43674">
    <property type="entry name" value="NITRILASE C965.09-RELATED"/>
    <property type="match status" value="1"/>
</dbReference>
<dbReference type="Pfam" id="PF00795">
    <property type="entry name" value="CN_hydrolase"/>
    <property type="match status" value="1"/>
</dbReference>
<dbReference type="SUPFAM" id="SSF56317">
    <property type="entry name" value="Carbon-nitrogen hydrolase"/>
    <property type="match status" value="1"/>
</dbReference>
<dbReference type="PROSITE" id="PS50263">
    <property type="entry name" value="CN_HYDROLASE"/>
    <property type="match status" value="1"/>
</dbReference>
<organism>
    <name type="scientific">Solanum lycopersicum</name>
    <name type="common">Tomato</name>
    <name type="synonym">Lycopersicon esculentum</name>
    <dbReference type="NCBI Taxonomy" id="4081"/>
    <lineage>
        <taxon>Eukaryota</taxon>
        <taxon>Viridiplantae</taxon>
        <taxon>Streptophyta</taxon>
        <taxon>Embryophyta</taxon>
        <taxon>Tracheophyta</taxon>
        <taxon>Spermatophyta</taxon>
        <taxon>Magnoliopsida</taxon>
        <taxon>eudicotyledons</taxon>
        <taxon>Gunneridae</taxon>
        <taxon>Pentapetalae</taxon>
        <taxon>asterids</taxon>
        <taxon>lamiids</taxon>
        <taxon>Solanales</taxon>
        <taxon>Solanaceae</taxon>
        <taxon>Solanoideae</taxon>
        <taxon>Solaneae</taxon>
        <taxon>Solanum</taxon>
        <taxon>Solanum subgen. Lycopersicon</taxon>
    </lineage>
</organism>
<name>AGUB_SOLLC</name>
<reference key="1">
    <citation type="submission" date="1999-06" db="EMBL/GenBank/DDBJ databases">
        <title>Isolation and characterization of a cDNA clone for a putative beta-alanine synthase from tomato (Lycopersicon esculentum Mill.) developing fruits.</title>
        <authorList>
            <person name="Chevalier C."/>
            <person name="Joubes J."/>
            <person name="Petit J."/>
            <person name="Raymond P."/>
        </authorList>
    </citation>
    <scope>NUCLEOTIDE SEQUENCE [MRNA]</scope>
    <source>
        <strain>cv. West Virginia 106</strain>
        <tissue>Fruit</tissue>
    </source>
</reference>
<reference key="2">
    <citation type="journal article" date="2003" name="J. Biol. Chem.">
        <title>Plant C-N hydrolases and the identification of a plant N-carbamoylputrescine amidohydrolase involved in polyamine biosynthesis.</title>
        <authorList>
            <person name="Piotrowski M."/>
            <person name="Janowitz T."/>
            <person name="Kneifel H."/>
        </authorList>
    </citation>
    <scope>FUNCTION</scope>
</reference>
<gene>
    <name type="primary">CPA</name>
</gene>
<accession>Q9XGI9</accession>
<feature type="chain" id="PRO_0000261603" description="N-carbamoylputrescine amidase">
    <location>
        <begin position="1"/>
        <end position="300"/>
    </location>
</feature>
<feature type="domain" description="CN hydrolase" evidence="2">
    <location>
        <begin position="8"/>
        <end position="266"/>
    </location>
</feature>
<feature type="active site" description="Proton acceptor" evidence="2">
    <location>
        <position position="47"/>
    </location>
</feature>
<feature type="active site" description="Proton donor" evidence="2">
    <location>
        <position position="120"/>
    </location>
</feature>
<feature type="active site" description="Nucleophile" evidence="2">
    <location>
        <position position="157"/>
    </location>
</feature>